<sequence>MVLYTTPFPNSCLSALHAVSWALIFPCYWLVDRLLASFIPTTYEKRQRADDPCCLQLFCTVLFTPVYLALLVAALPFAFLGFIFWSPLQSARRPYSYSRLEDKNPAGGAALLSEWKGTGAGKSFCFATANVCLLPDSLARLNNVFNTQARAKEIGQRIRNGAARPQIKIYIDSPTNTSISAASFSSLVSPQGGDGSRAVPGSIKRTASVEYKGDGGRHPSDEAANGPASGEQADGSLEDSCIVRIGGEEGGRPQEADDPAAGSQARNGAGGTPKGQTPNHNQRDGDSGSLGSPSASRESLVKARAGQDSGGSGEPGANSKLLYKTSVVKKAAARRRRHPDEAFDHEVSAFFPANLDFLCLQEVFDKRAAAKLKEQLHGYFEYILYDVGVYGCHGCCNFKCLNSGLFFASRYPVMDVAYHCYPNGCSFDALASKGALFLKVQVGSTPQDQRIVGYIACTHLHAPPEDSAVRCEQLDLLQDWLADFRKSTSSTSTANPEELVVFDVICGDLNFDNCSSDDKLEQQHSLFTRYKDPCRLGPGEEKPWAIGTLLDTNGLYDEDVCTPDNLQKVLESEEGRREYLAFPTSKSPGAGQKGRKDLLKGNGRRIDYMLHAEEGLCPDWKAEVEEFSFITQLSGLTDHLPVAMRLMVSAGEEEA</sequence>
<dbReference type="EC" id="3.1.4.12" evidence="7 8"/>
<dbReference type="EMBL" id="AJ250461">
    <property type="protein sequence ID" value="CAB92970.1"/>
    <property type="molecule type" value="mRNA"/>
</dbReference>
<dbReference type="EMBL" id="AK019476">
    <property type="protein sequence ID" value="BAB31745.1"/>
    <property type="molecule type" value="mRNA"/>
</dbReference>
<dbReference type="EMBL" id="AK139226">
    <property type="protein sequence ID" value="BAE23925.1"/>
    <property type="molecule type" value="mRNA"/>
</dbReference>
<dbReference type="EMBL" id="BC043077">
    <property type="protein sequence ID" value="AAH43077.1"/>
    <property type="molecule type" value="mRNA"/>
</dbReference>
<dbReference type="EMBL" id="BC046980">
    <property type="protein sequence ID" value="AAH46980.1"/>
    <property type="molecule type" value="mRNA"/>
</dbReference>
<dbReference type="CCDS" id="CCDS22634.1"/>
<dbReference type="RefSeq" id="NP_067466.1">
    <property type="nucleotide sequence ID" value="NM_021491.4"/>
</dbReference>
<dbReference type="RefSeq" id="XP_006531304.1">
    <property type="nucleotide sequence ID" value="XM_006531241.5"/>
</dbReference>
<dbReference type="RefSeq" id="XP_011246764.1">
    <property type="nucleotide sequence ID" value="XM_011248462.1"/>
</dbReference>
<dbReference type="RefSeq" id="XP_011246765.1">
    <property type="nucleotide sequence ID" value="XM_011248463.4"/>
</dbReference>
<dbReference type="SMR" id="Q9JJY3"/>
<dbReference type="BioGRID" id="208469">
    <property type="interactions" value="5"/>
</dbReference>
<dbReference type="DIP" id="DIP-60430N"/>
<dbReference type="FunCoup" id="Q9JJY3">
    <property type="interactions" value="879"/>
</dbReference>
<dbReference type="IntAct" id="Q9JJY3">
    <property type="interactions" value="2"/>
</dbReference>
<dbReference type="STRING" id="10090.ENSMUSP00000069255"/>
<dbReference type="SwissLipids" id="SLP:000000215"/>
<dbReference type="iPTMnet" id="Q9JJY3"/>
<dbReference type="PhosphoSitePlus" id="Q9JJY3"/>
<dbReference type="SwissPalm" id="Q9JJY3"/>
<dbReference type="PaxDb" id="10090-ENSMUSP00000069255"/>
<dbReference type="PeptideAtlas" id="Q9JJY3"/>
<dbReference type="ProteomicsDB" id="287826"/>
<dbReference type="Pumba" id="Q9JJY3"/>
<dbReference type="Antibodypedia" id="29783">
    <property type="antibodies" value="163 antibodies from 21 providers"/>
</dbReference>
<dbReference type="DNASU" id="58994"/>
<dbReference type="Ensembl" id="ENSMUST00000067512.8">
    <property type="protein sequence ID" value="ENSMUSP00000069255.8"/>
    <property type="gene ID" value="ENSMUSG00000031906.10"/>
</dbReference>
<dbReference type="Ensembl" id="ENSMUST00000212896.2">
    <property type="protein sequence ID" value="ENSMUSP00000148282.2"/>
    <property type="gene ID" value="ENSMUSG00000031906.10"/>
</dbReference>
<dbReference type="GeneID" id="58994"/>
<dbReference type="KEGG" id="mmu:58994"/>
<dbReference type="UCSC" id="uc009nfx.1">
    <property type="organism name" value="mouse"/>
</dbReference>
<dbReference type="AGR" id="MGI:1927578"/>
<dbReference type="CTD" id="55512"/>
<dbReference type="MGI" id="MGI:1927578">
    <property type="gene designation" value="Smpd3"/>
</dbReference>
<dbReference type="VEuPathDB" id="HostDB:ENSMUSG00000031906"/>
<dbReference type="eggNOG" id="ENOG502QVS2">
    <property type="taxonomic scope" value="Eukaryota"/>
</dbReference>
<dbReference type="GeneTree" id="ENSGT00400000022168"/>
<dbReference type="HOGENOM" id="CLU_028243_0_0_1"/>
<dbReference type="InParanoid" id="Q9JJY3"/>
<dbReference type="OMA" id="EENGHMS"/>
<dbReference type="OrthoDB" id="40902at2759"/>
<dbReference type="PhylomeDB" id="Q9JJY3"/>
<dbReference type="TreeFam" id="TF328678"/>
<dbReference type="BRENDA" id="3.1.4.12">
    <property type="organism ID" value="3474"/>
</dbReference>
<dbReference type="Reactome" id="R-MMU-5626978">
    <property type="pathway name" value="TNFR1-mediated ceramide production"/>
</dbReference>
<dbReference type="Reactome" id="R-MMU-9840310">
    <property type="pathway name" value="Glycosphingolipid catabolism"/>
</dbReference>
<dbReference type="UniPathway" id="UPA00222"/>
<dbReference type="BioGRID-ORCS" id="58994">
    <property type="hits" value="7 hits in 79 CRISPR screens"/>
</dbReference>
<dbReference type="CD-CODE" id="CE726F99">
    <property type="entry name" value="Postsynaptic density"/>
</dbReference>
<dbReference type="ChiTaRS" id="Smpd3">
    <property type="organism name" value="mouse"/>
</dbReference>
<dbReference type="PRO" id="PR:Q9JJY3"/>
<dbReference type="Proteomes" id="UP000000589">
    <property type="component" value="Chromosome 8"/>
</dbReference>
<dbReference type="RNAct" id="Q9JJY3">
    <property type="molecule type" value="protein"/>
</dbReference>
<dbReference type="Bgee" id="ENSMUSG00000031906">
    <property type="expression patterns" value="Expressed in intramembranous bone and 165 other cell types or tissues"/>
</dbReference>
<dbReference type="GO" id="GO:0005576">
    <property type="term" value="C:extracellular region"/>
    <property type="evidence" value="ECO:0007669"/>
    <property type="project" value="InterPro"/>
</dbReference>
<dbReference type="GO" id="GO:0005794">
    <property type="term" value="C:Golgi apparatus"/>
    <property type="evidence" value="ECO:0000314"/>
    <property type="project" value="MGI"/>
</dbReference>
<dbReference type="GO" id="GO:0000137">
    <property type="term" value="C:Golgi cis cisterna"/>
    <property type="evidence" value="ECO:0000314"/>
    <property type="project" value="MGI"/>
</dbReference>
<dbReference type="GO" id="GO:0000139">
    <property type="term" value="C:Golgi membrane"/>
    <property type="evidence" value="ECO:0007669"/>
    <property type="project" value="UniProtKB-SubCell"/>
</dbReference>
<dbReference type="GO" id="GO:0005886">
    <property type="term" value="C:plasma membrane"/>
    <property type="evidence" value="ECO:0000314"/>
    <property type="project" value="UniProtKB"/>
</dbReference>
<dbReference type="GO" id="GO:0042802">
    <property type="term" value="F:identical protein binding"/>
    <property type="evidence" value="ECO:0000353"/>
    <property type="project" value="MGI"/>
</dbReference>
<dbReference type="GO" id="GO:0046872">
    <property type="term" value="F:metal ion binding"/>
    <property type="evidence" value="ECO:0007669"/>
    <property type="project" value="UniProtKB-KW"/>
</dbReference>
<dbReference type="GO" id="GO:0061751">
    <property type="term" value="F:neutral sphingomyelin phosphodiesterase activity"/>
    <property type="evidence" value="ECO:0000314"/>
    <property type="project" value="MGI"/>
</dbReference>
<dbReference type="GO" id="GO:0070300">
    <property type="term" value="F:phosphatidic acid binding"/>
    <property type="evidence" value="ECO:0000314"/>
    <property type="project" value="UniProtKB"/>
</dbReference>
<dbReference type="GO" id="GO:0001786">
    <property type="term" value="F:phosphatidylserine binding"/>
    <property type="evidence" value="ECO:0000314"/>
    <property type="project" value="UniProtKB"/>
</dbReference>
<dbReference type="GO" id="GO:0004767">
    <property type="term" value="F:sphingomyelin phosphodiesterase activity"/>
    <property type="evidence" value="ECO:0000314"/>
    <property type="project" value="UniProtKB"/>
</dbReference>
<dbReference type="GO" id="GO:0030509">
    <property type="term" value="P:BMP signaling pathway"/>
    <property type="evidence" value="ECO:0000314"/>
    <property type="project" value="MGI"/>
</dbReference>
<dbReference type="GO" id="GO:0060348">
    <property type="term" value="P:bone development"/>
    <property type="evidence" value="ECO:0000315"/>
    <property type="project" value="MGI"/>
</dbReference>
<dbReference type="GO" id="GO:0098868">
    <property type="term" value="P:bone growth"/>
    <property type="evidence" value="ECO:0000315"/>
    <property type="project" value="MGI"/>
</dbReference>
<dbReference type="GO" id="GO:0030282">
    <property type="term" value="P:bone mineralization"/>
    <property type="evidence" value="ECO:0000314"/>
    <property type="project" value="MGI"/>
</dbReference>
<dbReference type="GO" id="GO:0051216">
    <property type="term" value="P:cartilage development"/>
    <property type="evidence" value="ECO:0000314"/>
    <property type="project" value="MGI"/>
</dbReference>
<dbReference type="GO" id="GO:0070301">
    <property type="term" value="P:cellular response to hydrogen peroxide"/>
    <property type="evidence" value="ECO:0000314"/>
    <property type="project" value="MGI"/>
</dbReference>
<dbReference type="GO" id="GO:0071286">
    <property type="term" value="P:cellular response to magnesium ion"/>
    <property type="evidence" value="ECO:0000314"/>
    <property type="project" value="MGI"/>
</dbReference>
<dbReference type="GO" id="GO:0140052">
    <property type="term" value="P:cellular response to oxidised low-density lipoprotein particle stimulus"/>
    <property type="evidence" value="ECO:0000315"/>
    <property type="project" value="MGI"/>
</dbReference>
<dbReference type="GO" id="GO:1901653">
    <property type="term" value="P:cellular response to peptide"/>
    <property type="evidence" value="ECO:0000315"/>
    <property type="project" value="MGI"/>
</dbReference>
<dbReference type="GO" id="GO:0034614">
    <property type="term" value="P:cellular response to reactive oxygen species"/>
    <property type="evidence" value="ECO:0000315"/>
    <property type="project" value="MGI"/>
</dbReference>
<dbReference type="GO" id="GO:0071461">
    <property type="term" value="P:cellular response to redox state"/>
    <property type="evidence" value="ECO:0000315"/>
    <property type="project" value="MGI"/>
</dbReference>
<dbReference type="GO" id="GO:0071356">
    <property type="term" value="P:cellular response to tumor necrosis factor"/>
    <property type="evidence" value="ECO:0000315"/>
    <property type="project" value="MGI"/>
</dbReference>
<dbReference type="GO" id="GO:0006672">
    <property type="term" value="P:ceramide metabolic process"/>
    <property type="evidence" value="ECO:0000315"/>
    <property type="project" value="MGI"/>
</dbReference>
<dbReference type="GO" id="GO:0002063">
    <property type="term" value="P:chondrocyte development"/>
    <property type="evidence" value="ECO:0000315"/>
    <property type="project" value="MGI"/>
</dbReference>
<dbReference type="GO" id="GO:0003433">
    <property type="term" value="P:chondrocyte development involved in endochondral bone morphogenesis"/>
    <property type="evidence" value="ECO:0000315"/>
    <property type="project" value="MGI"/>
</dbReference>
<dbReference type="GO" id="GO:0032963">
    <property type="term" value="P:collagen metabolic process"/>
    <property type="evidence" value="ECO:0000315"/>
    <property type="project" value="MGI"/>
</dbReference>
<dbReference type="GO" id="GO:0097187">
    <property type="term" value="P:dentinogenesis"/>
    <property type="evidence" value="ECO:0000315"/>
    <property type="project" value="MGI"/>
</dbReference>
<dbReference type="GO" id="GO:0071897">
    <property type="term" value="P:DNA biosynthetic process"/>
    <property type="evidence" value="ECO:0000315"/>
    <property type="project" value="MGI"/>
</dbReference>
<dbReference type="GO" id="GO:0001958">
    <property type="term" value="P:endochondral ossification"/>
    <property type="evidence" value="ECO:0000315"/>
    <property type="project" value="MGI"/>
</dbReference>
<dbReference type="GO" id="GO:0085029">
    <property type="term" value="P:extracellular matrix assembly"/>
    <property type="evidence" value="ECO:0000315"/>
    <property type="project" value="MGI"/>
</dbReference>
<dbReference type="GO" id="GO:0070314">
    <property type="term" value="P:G1 to G0 transition"/>
    <property type="evidence" value="ECO:0000315"/>
    <property type="project" value="MGI"/>
</dbReference>
<dbReference type="GO" id="GO:0002244">
    <property type="term" value="P:hematopoietic progenitor cell differentiation"/>
    <property type="evidence" value="ECO:0000315"/>
    <property type="project" value="MGI"/>
</dbReference>
<dbReference type="GO" id="GO:0048286">
    <property type="term" value="P:lung alveolus development"/>
    <property type="evidence" value="ECO:0000315"/>
    <property type="project" value="MGI"/>
</dbReference>
<dbReference type="GO" id="GO:0030324">
    <property type="term" value="P:lung development"/>
    <property type="evidence" value="ECO:0000315"/>
    <property type="project" value="MGI"/>
</dbReference>
<dbReference type="GO" id="GO:0140014">
    <property type="term" value="P:mitotic nuclear division"/>
    <property type="evidence" value="ECO:0000315"/>
    <property type="project" value="MGI"/>
</dbReference>
<dbReference type="GO" id="GO:0035264">
    <property type="term" value="P:multicellular organism growth"/>
    <property type="evidence" value="ECO:0000314"/>
    <property type="project" value="MGI"/>
</dbReference>
<dbReference type="GO" id="GO:1900126">
    <property type="term" value="P:negative regulation of hyaluronan biosynthetic process"/>
    <property type="evidence" value="ECO:0000315"/>
    <property type="project" value="MGI"/>
</dbReference>
<dbReference type="GO" id="GO:0051898">
    <property type="term" value="P:negative regulation of phosphatidylinositol 3-kinase/protein kinase B signal transduction"/>
    <property type="evidence" value="ECO:0000315"/>
    <property type="project" value="MGI"/>
</dbReference>
<dbReference type="GO" id="GO:0001503">
    <property type="term" value="P:ossification"/>
    <property type="evidence" value="ECO:0000315"/>
    <property type="project" value="MGI"/>
</dbReference>
<dbReference type="GO" id="GO:0030072">
    <property type="term" value="P:peptide hormone secretion"/>
    <property type="evidence" value="ECO:0000315"/>
    <property type="project" value="MGI"/>
</dbReference>
<dbReference type="GO" id="GO:0048008">
    <property type="term" value="P:platelet-derived growth factor receptor signaling pathway"/>
    <property type="evidence" value="ECO:0000315"/>
    <property type="project" value="MGI"/>
</dbReference>
<dbReference type="GO" id="GO:0015774">
    <property type="term" value="P:polysaccharide transport"/>
    <property type="evidence" value="ECO:0000315"/>
    <property type="project" value="MGI"/>
</dbReference>
<dbReference type="GO" id="GO:0045840">
    <property type="term" value="P:positive regulation of mitotic nuclear division"/>
    <property type="evidence" value="ECO:0000316"/>
    <property type="project" value="MGI"/>
</dbReference>
<dbReference type="GO" id="GO:0048661">
    <property type="term" value="P:positive regulation of smooth muscle cell proliferation"/>
    <property type="evidence" value="ECO:0000315"/>
    <property type="project" value="MGI"/>
</dbReference>
<dbReference type="GO" id="GO:0061035">
    <property type="term" value="P:regulation of cartilage development"/>
    <property type="evidence" value="ECO:0000315"/>
    <property type="project" value="MGI"/>
</dbReference>
<dbReference type="GO" id="GO:1900125">
    <property type="term" value="P:regulation of hyaluronan biosynthetic process"/>
    <property type="evidence" value="ECO:0000315"/>
    <property type="project" value="MGI"/>
</dbReference>
<dbReference type="GO" id="GO:0002685">
    <property type="term" value="P:regulation of leukocyte migration"/>
    <property type="evidence" value="ECO:0000315"/>
    <property type="project" value="MGI"/>
</dbReference>
<dbReference type="GO" id="GO:0060541">
    <property type="term" value="P:respiratory system development"/>
    <property type="evidence" value="ECO:0000315"/>
    <property type="project" value="MGI"/>
</dbReference>
<dbReference type="GO" id="GO:0007165">
    <property type="term" value="P:signal transduction"/>
    <property type="evidence" value="ECO:0000315"/>
    <property type="project" value="MGI"/>
</dbReference>
<dbReference type="GO" id="GO:0001501">
    <property type="term" value="P:skeletal system development"/>
    <property type="evidence" value="ECO:0000314"/>
    <property type="project" value="MGI"/>
</dbReference>
<dbReference type="GO" id="GO:0090520">
    <property type="term" value="P:sphingolipid mediated signaling pathway"/>
    <property type="evidence" value="ECO:0000314"/>
    <property type="project" value="MGI"/>
</dbReference>
<dbReference type="GO" id="GO:0006665">
    <property type="term" value="P:sphingolipid metabolic process"/>
    <property type="evidence" value="ECO:0000315"/>
    <property type="project" value="MGI"/>
</dbReference>
<dbReference type="GO" id="GO:0006685">
    <property type="term" value="P:sphingomyelin catabolic process"/>
    <property type="evidence" value="ECO:0000315"/>
    <property type="project" value="MGI"/>
</dbReference>
<dbReference type="GO" id="GO:0006684">
    <property type="term" value="P:sphingomyelin metabolic process"/>
    <property type="evidence" value="ECO:0000314"/>
    <property type="project" value="UniProtKB"/>
</dbReference>
<dbReference type="CDD" id="cd09078">
    <property type="entry name" value="nSMase"/>
    <property type="match status" value="1"/>
</dbReference>
<dbReference type="FunFam" id="3.60.10.10:FF:000015">
    <property type="entry name" value="sphingomyelin phosphodiesterase 3"/>
    <property type="match status" value="1"/>
</dbReference>
<dbReference type="Gene3D" id="3.60.10.10">
    <property type="entry name" value="Endonuclease/exonuclease/phosphatase"/>
    <property type="match status" value="1"/>
</dbReference>
<dbReference type="InterPro" id="IPR036691">
    <property type="entry name" value="Endo/exonu/phosph_ase_sf"/>
</dbReference>
<dbReference type="InterPro" id="IPR005135">
    <property type="entry name" value="Endo/exonuclease/phosphatase"/>
</dbReference>
<dbReference type="InterPro" id="IPR038772">
    <property type="entry name" value="Sph/SMPD2-like"/>
</dbReference>
<dbReference type="InterPro" id="IPR017766">
    <property type="entry name" value="Sphingomyelinase/PLipase_C"/>
</dbReference>
<dbReference type="PANTHER" id="PTHR16320:SF8">
    <property type="entry name" value="SPHINGOMYELIN PHOSPHODIESTERASE 3"/>
    <property type="match status" value="1"/>
</dbReference>
<dbReference type="PANTHER" id="PTHR16320">
    <property type="entry name" value="SPHINGOMYELINASE FAMILY MEMBER"/>
    <property type="match status" value="1"/>
</dbReference>
<dbReference type="Pfam" id="PF03372">
    <property type="entry name" value="Exo_endo_phos"/>
    <property type="match status" value="1"/>
</dbReference>
<dbReference type="SUPFAM" id="SSF56219">
    <property type="entry name" value="DNase I-like"/>
    <property type="match status" value="1"/>
</dbReference>
<feature type="chain" id="PRO_0000075693" description="Sphingomyelin phosphodiesterase 3">
    <location>
        <begin position="1"/>
        <end position="655"/>
    </location>
</feature>
<feature type="topological domain" description="Cytoplasmic" evidence="4">
    <location>
        <begin position="1"/>
        <end position="10"/>
    </location>
</feature>
<feature type="intramembrane region" description="Helical" evidence="4">
    <location>
        <begin position="11"/>
        <end position="31"/>
    </location>
</feature>
<feature type="topological domain" description="Cytoplasmic" evidence="4">
    <location>
        <begin position="32"/>
        <end position="64"/>
    </location>
</feature>
<feature type="intramembrane region" description="Helical" evidence="4">
    <location>
        <begin position="65"/>
        <end position="85"/>
    </location>
</feature>
<feature type="topological domain" description="Cytoplasmic" evidence="4">
    <location>
        <begin position="86"/>
        <end position="655"/>
    </location>
</feature>
<feature type="region of interest" description="Disordered" evidence="5">
    <location>
        <begin position="209"/>
        <end position="318"/>
    </location>
</feature>
<feature type="compositionally biased region" description="Basic and acidic residues" evidence="5">
    <location>
        <begin position="211"/>
        <end position="221"/>
    </location>
</feature>
<feature type="compositionally biased region" description="Basic and acidic residues" evidence="5">
    <location>
        <begin position="246"/>
        <end position="255"/>
    </location>
</feature>
<feature type="active site" description="Proton acceptor" evidence="1">
    <location>
        <position position="639"/>
    </location>
</feature>
<feature type="binding site" evidence="1">
    <location>
        <position position="362"/>
    </location>
    <ligand>
        <name>Mg(2+)</name>
        <dbReference type="ChEBI" id="CHEBI:18420"/>
    </ligand>
</feature>
<feature type="site" description="Important for substrate recognition" evidence="1">
    <location>
        <position position="510"/>
    </location>
</feature>
<feature type="modified residue" description="Phosphoserine" evidence="19">
    <location>
        <position position="178"/>
    </location>
</feature>
<feature type="modified residue" description="Phosphoserine" evidence="19">
    <location>
        <position position="289"/>
    </location>
</feature>
<feature type="lipid moiety-binding region" description="S-palmitoyl cysteine" evidence="12">
    <location>
        <position position="53"/>
    </location>
</feature>
<feature type="lipid moiety-binding region" description="S-palmitoyl cysteine" evidence="12">
    <location>
        <position position="54"/>
    </location>
</feature>
<feature type="lipid moiety-binding region" description="S-palmitoyl cysteine" evidence="12">
    <location>
        <position position="59"/>
    </location>
</feature>
<feature type="lipid moiety-binding region" description="S-palmitoyl cysteine" evidence="12">
    <location>
        <position position="395"/>
    </location>
</feature>
<feature type="lipid moiety-binding region" description="S-palmitoyl cysteine" evidence="12">
    <location>
        <position position="396"/>
    </location>
</feature>
<feature type="mutagenesis site" description="Strongly decreases binding with phosphatidic acid and phosphatidylserine. Abolishes binding with phosphatidic acid and phosphatidylserine; when associated with 45-DEL-48. Strongly decreases sphingomyelin phosphodiesterase activity; when associated with 45-DEL-48. Abolishes sphingomyelin phosphodiesterase activity and locates at endoplasmic reticulum; when associated with 45-DEL-48 and 92-A-A-93." evidence="13">
    <original>R</original>
    <variation>A</variation>
    <location>
        <position position="33"/>
    </location>
</feature>
<feature type="mutagenesis site" description="Strongly decreases binding with phosphatidic acid and phosphatidylserine. Abolishes binding with phosphatidic acid and phosphatidylserine; when associated with A-33. Strongly decreases sphingomyelin phosphodiesterase activity; when associated with A-33. Abolishes sphingomyelin phosphodiesterase activity and locates at endoplasmic reticulum; when associated with A-33 and 92-A-A-93." evidence="13">
    <location>
        <begin position="45"/>
        <end position="48"/>
    </location>
</feature>
<feature type="mutagenesis site" description="Abolishes binding with phosphatidic acid. No effect on cell membrane location. Strongly decreases sphingomyelin phosphodiesterase activity. Abolishes sphingomyelin phosphodiesterase activity and locates at endoplasmic reticulum; when associated with A-33 and 45-DEL-48." evidence="13">
    <original>RR</original>
    <variation>AA</variation>
    <location>
        <begin position="92"/>
        <end position="93"/>
    </location>
</feature>
<feature type="mutagenesis site" description="Strongly decreases binding with phosphatidic acid." evidence="13">
    <original>R</original>
    <variation>A</variation>
    <location>
        <position position="92"/>
    </location>
</feature>
<feature type="mutagenesis site" description="Strongly decreases binding with phosphatidic acid." evidence="13">
    <original>R</original>
    <variation>A</variation>
    <location>
        <position position="93"/>
    </location>
</feature>
<feature type="mutagenesis site" description="No effect on binding with phosphatidic acid." evidence="13">
    <original>R</original>
    <variation>A</variation>
    <location>
        <position position="99"/>
    </location>
</feature>
<protein>
    <recommendedName>
        <fullName evidence="15">Sphingomyelin phosphodiesterase 3</fullName>
        <ecNumber evidence="7 8">3.1.4.12</ecNumber>
    </recommendedName>
    <alternativeName>
        <fullName>Neutral sphingomyelinase 2</fullName>
        <shortName>nSMase-2</shortName>
        <shortName evidence="14">nSMase2</shortName>
    </alternativeName>
    <alternativeName>
        <fullName>Neutral sphingomyelinase II</fullName>
    </alternativeName>
</protein>
<proteinExistence type="evidence at protein level"/>
<evidence type="ECO:0000250" key="1"/>
<evidence type="ECO:0000250" key="2">
    <source>
        <dbReference type="UniProtKB" id="O35049"/>
    </source>
</evidence>
<evidence type="ECO:0000250" key="3">
    <source>
        <dbReference type="UniProtKB" id="Q9NY59"/>
    </source>
</evidence>
<evidence type="ECO:0000255" key="4"/>
<evidence type="ECO:0000256" key="5">
    <source>
        <dbReference type="SAM" id="MobiDB-lite"/>
    </source>
</evidence>
<evidence type="ECO:0000269" key="6">
    <source>
    </source>
</evidence>
<evidence type="ECO:0000269" key="7">
    <source>
    </source>
</evidence>
<evidence type="ECO:0000269" key="8">
    <source>
    </source>
</evidence>
<evidence type="ECO:0000269" key="9">
    <source>
    </source>
</evidence>
<evidence type="ECO:0000269" key="10">
    <source>
    </source>
</evidence>
<evidence type="ECO:0000269" key="11">
    <source>
    </source>
</evidence>
<evidence type="ECO:0000269" key="12">
    <source>
    </source>
</evidence>
<evidence type="ECO:0000269" key="13">
    <source>
    </source>
</evidence>
<evidence type="ECO:0000303" key="14">
    <source>
    </source>
</evidence>
<evidence type="ECO:0000305" key="15"/>
<evidence type="ECO:0000305" key="16">
    <source>
    </source>
</evidence>
<evidence type="ECO:0000305" key="17">
    <source>
    </source>
</evidence>
<evidence type="ECO:0000312" key="18">
    <source>
        <dbReference type="MGI" id="MGI:1927578"/>
    </source>
</evidence>
<evidence type="ECO:0007744" key="19">
    <source>
    </source>
</evidence>
<name>NSMA2_MOUSE</name>
<gene>
    <name evidence="18" type="primary">Smpd3</name>
</gene>
<keyword id="KW-0131">Cell cycle</keyword>
<keyword id="KW-1003">Cell membrane</keyword>
<keyword id="KW-0217">Developmental protein</keyword>
<keyword id="KW-0333">Golgi apparatus</keyword>
<keyword id="KW-0378">Hydrolase</keyword>
<keyword id="KW-0443">Lipid metabolism</keyword>
<keyword id="KW-0449">Lipoprotein</keyword>
<keyword id="KW-0460">Magnesium</keyword>
<keyword id="KW-0472">Membrane</keyword>
<keyword id="KW-0479">Metal-binding</keyword>
<keyword id="KW-0564">Palmitate</keyword>
<keyword id="KW-0597">Phosphoprotein</keyword>
<keyword id="KW-1185">Reference proteome</keyword>
<keyword id="KW-0746">Sphingolipid metabolism</keyword>
<organism>
    <name type="scientific">Mus musculus</name>
    <name type="common">Mouse</name>
    <dbReference type="NCBI Taxonomy" id="10090"/>
    <lineage>
        <taxon>Eukaryota</taxon>
        <taxon>Metazoa</taxon>
        <taxon>Chordata</taxon>
        <taxon>Craniata</taxon>
        <taxon>Vertebrata</taxon>
        <taxon>Euteleostomi</taxon>
        <taxon>Mammalia</taxon>
        <taxon>Eutheria</taxon>
        <taxon>Euarchontoglires</taxon>
        <taxon>Glires</taxon>
        <taxon>Rodentia</taxon>
        <taxon>Myomorpha</taxon>
        <taxon>Muroidea</taxon>
        <taxon>Muridae</taxon>
        <taxon>Murinae</taxon>
        <taxon>Mus</taxon>
        <taxon>Mus</taxon>
    </lineage>
</organism>
<accession>Q9JJY3</accession>
<accession>Q3UTQ5</accession>
<comment type="function">
    <text evidence="2 8 9 10 11 13">Catalyzes the hydrolysis of sphingomyelin to form ceramide and phosphocholine. Ceramide mediates numerous cellular functions, such as apoptosis and growth arrest, and is capable of regulating these 2 cellular events independently. Also hydrolyzes sphingosylphosphocholine. Regulates the cell cycle by acting as a growth suppressor in confluent cells. Probably acts as a regulator of postnatal development and participates in bone and dentin mineralization (PubMed:15051724, PubMed:15764706, PubMed:15929065, PubMed:16025116). Binds to anionic phospholipids (APLs) such as phosphatidylserine (PS) and phosphatidic acid (PA) that modulate enzymatic activity and subcellular location (PubMed:21550973). May be involved in IL-1-beta-induced JNK activation in hepatocytes (By similarity). May act as a mediator in transcriptional regulation of NOS2/iNOS via the NF-kappa-B activation under inflammatory conditions (By similarity).</text>
</comment>
<comment type="catalytic activity">
    <reaction evidence="7 8">
        <text>a sphingomyelin + H2O = phosphocholine + an N-acylsphing-4-enine + H(+)</text>
        <dbReference type="Rhea" id="RHEA:19253"/>
        <dbReference type="ChEBI" id="CHEBI:15377"/>
        <dbReference type="ChEBI" id="CHEBI:15378"/>
        <dbReference type="ChEBI" id="CHEBI:17636"/>
        <dbReference type="ChEBI" id="CHEBI:52639"/>
        <dbReference type="ChEBI" id="CHEBI:295975"/>
        <dbReference type="EC" id="3.1.4.12"/>
    </reaction>
    <physiologicalReaction direction="left-to-right" evidence="16">
        <dbReference type="Rhea" id="RHEA:19254"/>
    </physiologicalReaction>
</comment>
<comment type="catalytic activity">
    <reaction evidence="8">
        <text>N-(15Z-tetracosenoyl)sphing-4-enine-1-phosphocholine + H2O = N-(15Z-tetracosenoyl)-sphing-4-enine + phosphocholine + H(+)</text>
        <dbReference type="Rhea" id="RHEA:45320"/>
        <dbReference type="ChEBI" id="CHEBI:15377"/>
        <dbReference type="ChEBI" id="CHEBI:15378"/>
        <dbReference type="ChEBI" id="CHEBI:74450"/>
        <dbReference type="ChEBI" id="CHEBI:74535"/>
        <dbReference type="ChEBI" id="CHEBI:295975"/>
    </reaction>
    <physiologicalReaction direction="left-to-right" evidence="16">
        <dbReference type="Rhea" id="RHEA:45321"/>
    </physiologicalReaction>
</comment>
<comment type="catalytic activity">
    <reaction evidence="8">
        <text>N-(tetracosanoyl)-sphing-4-enine-1-phosphocholine + H2O = N-tetracosanoyl-sphing-4-enine + phosphocholine + H(+)</text>
        <dbReference type="Rhea" id="RHEA:45324"/>
        <dbReference type="ChEBI" id="CHEBI:15377"/>
        <dbReference type="ChEBI" id="CHEBI:15378"/>
        <dbReference type="ChEBI" id="CHEBI:72965"/>
        <dbReference type="ChEBI" id="CHEBI:83360"/>
        <dbReference type="ChEBI" id="CHEBI:295975"/>
    </reaction>
    <physiologicalReaction direction="left-to-right" evidence="16">
        <dbReference type="Rhea" id="RHEA:45325"/>
    </physiologicalReaction>
</comment>
<comment type="catalytic activity">
    <reaction evidence="13">
        <text>N-(hexadecanoyl)-sphing-4-enine-1-phosphocholine + H2O = N-hexadecanoylsphing-4-enine + phosphocholine + H(+)</text>
        <dbReference type="Rhea" id="RHEA:45644"/>
        <dbReference type="ChEBI" id="CHEBI:15377"/>
        <dbReference type="ChEBI" id="CHEBI:15378"/>
        <dbReference type="ChEBI" id="CHEBI:72959"/>
        <dbReference type="ChEBI" id="CHEBI:78646"/>
        <dbReference type="ChEBI" id="CHEBI:295975"/>
    </reaction>
    <physiologicalReaction direction="left-to-right" evidence="17">
        <dbReference type="Rhea" id="RHEA:45645"/>
    </physiologicalReaction>
</comment>
<comment type="catalytic activity">
    <reaction evidence="3">
        <text>an N-(acyl)-sphingosylphosphocholine + H2O = an N-acyl-sphingoid base + phosphocholine + H(+)</text>
        <dbReference type="Rhea" id="RHEA:45300"/>
        <dbReference type="ChEBI" id="CHEBI:15377"/>
        <dbReference type="ChEBI" id="CHEBI:15378"/>
        <dbReference type="ChEBI" id="CHEBI:64583"/>
        <dbReference type="ChEBI" id="CHEBI:83273"/>
        <dbReference type="ChEBI" id="CHEBI:295975"/>
    </reaction>
    <physiologicalReaction direction="left-to-right" evidence="3">
        <dbReference type="Rhea" id="RHEA:45301"/>
    </physiologicalReaction>
</comment>
<comment type="catalytic activity">
    <reaction evidence="3">
        <text>1-hexadecanoyl-sn-glycero-3-phosphocholine + H2O = 1-hexadecanoyl-sn-glycerol + phosphocholine + H(+)</text>
        <dbReference type="Rhea" id="RHEA:41119"/>
        <dbReference type="ChEBI" id="CHEBI:15377"/>
        <dbReference type="ChEBI" id="CHEBI:15378"/>
        <dbReference type="ChEBI" id="CHEBI:72998"/>
        <dbReference type="ChEBI" id="CHEBI:75542"/>
        <dbReference type="ChEBI" id="CHEBI:295975"/>
    </reaction>
    <physiologicalReaction direction="left-to-right" evidence="3">
        <dbReference type="Rhea" id="RHEA:41120"/>
    </physiologicalReaction>
</comment>
<comment type="catalytic activity">
    <reaction evidence="3">
        <text>1-O-octadecyl-sn-glycero-3-phosphocholine + H2O = 1-O-octadecyl-sn-glycerol + phosphocholine + H(+)</text>
        <dbReference type="Rhea" id="RHEA:39923"/>
        <dbReference type="ChEBI" id="CHEBI:15377"/>
        <dbReference type="ChEBI" id="CHEBI:15378"/>
        <dbReference type="ChEBI" id="CHEBI:74001"/>
        <dbReference type="ChEBI" id="CHEBI:75216"/>
        <dbReference type="ChEBI" id="CHEBI:295975"/>
    </reaction>
    <physiologicalReaction direction="left-to-right" evidence="3">
        <dbReference type="Rhea" id="RHEA:39924"/>
    </physiologicalReaction>
</comment>
<comment type="catalytic activity">
    <reaction evidence="3">
        <text>a sphingosylphosphocholine + H2O = a sphingoid base + phosphocholine + H(+)</text>
        <dbReference type="Rhea" id="RHEA:45296"/>
        <dbReference type="ChEBI" id="CHEBI:15377"/>
        <dbReference type="ChEBI" id="CHEBI:15378"/>
        <dbReference type="ChEBI" id="CHEBI:84410"/>
        <dbReference type="ChEBI" id="CHEBI:85171"/>
        <dbReference type="ChEBI" id="CHEBI:295975"/>
    </reaction>
    <physiologicalReaction direction="left-to-right" evidence="3">
        <dbReference type="Rhea" id="RHEA:45297"/>
    </physiologicalReaction>
</comment>
<comment type="cofactor">
    <cofactor evidence="7">
        <name>Mg(2+)</name>
        <dbReference type="ChEBI" id="CHEBI:18420"/>
    </cofactor>
</comment>
<comment type="activity regulation">
    <text evidence="7 13">Inhibited by nSMase inhibitor GW4869. Binding of anionic phospholipids (APLs) such as phosphatidylserine (PS) and phosphatidic acid (PA) increases enzymatic activity (PubMed:21550973).</text>
</comment>
<comment type="pathway">
    <text evidence="8">Lipid metabolism; sphingolipid metabolism.</text>
</comment>
<comment type="interaction">
    <interactant intactId="EBI-9817007">
        <id>Q9JJY3</id>
    </interactant>
    <interactant intactId="EBI-923794">
        <id>O75530</id>
        <label>EED</label>
    </interactant>
    <organismsDiffer>true</organismsDiffer>
    <experiments>5</experiments>
</comment>
<comment type="interaction">
    <interactant intactId="EBI-9817007">
        <id>Q9JJY3</id>
    </interactant>
    <interactant intactId="EBI-352528">
        <id>P10809</id>
        <label>HSPD1</label>
    </interactant>
    <organismsDiffer>true</organismsDiffer>
    <experiments>3</experiments>
</comment>
<comment type="subcellular location">
    <subcellularLocation>
        <location evidence="9">Golgi apparatus membrane</location>
        <topology evidence="9">Lipid-anchor</topology>
    </subcellularLocation>
    <subcellularLocation>
        <location evidence="12 13">Cell membrane</location>
        <topology evidence="12">Lipid-anchor</topology>
    </subcellularLocation>
    <text>May localize to detergent-resistant subdomains of Golgi membranes of hypothalamic neurosecretory neurons (PubMed:15764706).</text>
</comment>
<comment type="tissue specificity">
    <text evidence="6">Predominantly expressed in brain (at protein level).</text>
</comment>
<comment type="PTM">
    <text evidence="12">Palmitoylated, palmitoylation-deficient proteins are targeted for lysosomal degradation.</text>
</comment>
<comment type="disruption phenotype">
    <text evidence="9">Defects in smpd3 are the cause of fragilitas ossium (fro) mutation characterized by severe osteogenesis and dentinogenesis imperfecta with no detectable collagen defect. Mice lacking Smpd2 and Smpd3 are completely devoid of neutral SMase activity but do not developed sphingomyelin storage abnormalities. Mice lacking Smpd3 develop a form of dwarfism and delayed puberty as part of a hypothalamus-induced combined pituitary hormone deficiency (CPHD). Growth retardation is probably due to delayed ossification of long bones.</text>
</comment>
<comment type="similarity">
    <text evidence="15">Belongs to the neutral sphingomyelinase family.</text>
</comment>
<reference key="1">
    <citation type="journal article" date="2000" name="Proc. Natl. Acad. Sci. U.S.A.">
        <title>Cloning and characterization of the mammalian brain-specific, Mg2+-dependent neutral sphingomyelinase.</title>
        <authorList>
            <person name="Hofmann K."/>
            <person name="Tomiuk S."/>
            <person name="Wolff G."/>
            <person name="Stoffel W."/>
        </authorList>
    </citation>
    <scope>NUCLEOTIDE SEQUENCE [MRNA]</scope>
    <scope>TISSUE SPECIFICITY</scope>
</reference>
<reference key="2">
    <citation type="journal article" date="2005" name="Science">
        <title>The transcriptional landscape of the mammalian genome.</title>
        <authorList>
            <person name="Carninci P."/>
            <person name="Kasukawa T."/>
            <person name="Katayama S."/>
            <person name="Gough J."/>
            <person name="Frith M.C."/>
            <person name="Maeda N."/>
            <person name="Oyama R."/>
            <person name="Ravasi T."/>
            <person name="Lenhard B."/>
            <person name="Wells C."/>
            <person name="Kodzius R."/>
            <person name="Shimokawa K."/>
            <person name="Bajic V.B."/>
            <person name="Brenner S.E."/>
            <person name="Batalov S."/>
            <person name="Forrest A.R."/>
            <person name="Zavolan M."/>
            <person name="Davis M.J."/>
            <person name="Wilming L.G."/>
            <person name="Aidinis V."/>
            <person name="Allen J.E."/>
            <person name="Ambesi-Impiombato A."/>
            <person name="Apweiler R."/>
            <person name="Aturaliya R.N."/>
            <person name="Bailey T.L."/>
            <person name="Bansal M."/>
            <person name="Baxter L."/>
            <person name="Beisel K.W."/>
            <person name="Bersano T."/>
            <person name="Bono H."/>
            <person name="Chalk A.M."/>
            <person name="Chiu K.P."/>
            <person name="Choudhary V."/>
            <person name="Christoffels A."/>
            <person name="Clutterbuck D.R."/>
            <person name="Crowe M.L."/>
            <person name="Dalla E."/>
            <person name="Dalrymple B.P."/>
            <person name="de Bono B."/>
            <person name="Della Gatta G."/>
            <person name="di Bernardo D."/>
            <person name="Down T."/>
            <person name="Engstrom P."/>
            <person name="Fagiolini M."/>
            <person name="Faulkner G."/>
            <person name="Fletcher C.F."/>
            <person name="Fukushima T."/>
            <person name="Furuno M."/>
            <person name="Futaki S."/>
            <person name="Gariboldi M."/>
            <person name="Georgii-Hemming P."/>
            <person name="Gingeras T.R."/>
            <person name="Gojobori T."/>
            <person name="Green R.E."/>
            <person name="Gustincich S."/>
            <person name="Harbers M."/>
            <person name="Hayashi Y."/>
            <person name="Hensch T.K."/>
            <person name="Hirokawa N."/>
            <person name="Hill D."/>
            <person name="Huminiecki L."/>
            <person name="Iacono M."/>
            <person name="Ikeo K."/>
            <person name="Iwama A."/>
            <person name="Ishikawa T."/>
            <person name="Jakt M."/>
            <person name="Kanapin A."/>
            <person name="Katoh M."/>
            <person name="Kawasawa Y."/>
            <person name="Kelso J."/>
            <person name="Kitamura H."/>
            <person name="Kitano H."/>
            <person name="Kollias G."/>
            <person name="Krishnan S.P."/>
            <person name="Kruger A."/>
            <person name="Kummerfeld S.K."/>
            <person name="Kurochkin I.V."/>
            <person name="Lareau L.F."/>
            <person name="Lazarevic D."/>
            <person name="Lipovich L."/>
            <person name="Liu J."/>
            <person name="Liuni S."/>
            <person name="McWilliam S."/>
            <person name="Madan Babu M."/>
            <person name="Madera M."/>
            <person name="Marchionni L."/>
            <person name="Matsuda H."/>
            <person name="Matsuzawa S."/>
            <person name="Miki H."/>
            <person name="Mignone F."/>
            <person name="Miyake S."/>
            <person name="Morris K."/>
            <person name="Mottagui-Tabar S."/>
            <person name="Mulder N."/>
            <person name="Nakano N."/>
            <person name="Nakauchi H."/>
            <person name="Ng P."/>
            <person name="Nilsson R."/>
            <person name="Nishiguchi S."/>
            <person name="Nishikawa S."/>
            <person name="Nori F."/>
            <person name="Ohara O."/>
            <person name="Okazaki Y."/>
            <person name="Orlando V."/>
            <person name="Pang K.C."/>
            <person name="Pavan W.J."/>
            <person name="Pavesi G."/>
            <person name="Pesole G."/>
            <person name="Petrovsky N."/>
            <person name="Piazza S."/>
            <person name="Reed J."/>
            <person name="Reid J.F."/>
            <person name="Ring B.Z."/>
            <person name="Ringwald M."/>
            <person name="Rost B."/>
            <person name="Ruan Y."/>
            <person name="Salzberg S.L."/>
            <person name="Sandelin A."/>
            <person name="Schneider C."/>
            <person name="Schoenbach C."/>
            <person name="Sekiguchi K."/>
            <person name="Semple C.A."/>
            <person name="Seno S."/>
            <person name="Sessa L."/>
            <person name="Sheng Y."/>
            <person name="Shibata Y."/>
            <person name="Shimada H."/>
            <person name="Shimada K."/>
            <person name="Silva D."/>
            <person name="Sinclair B."/>
            <person name="Sperling S."/>
            <person name="Stupka E."/>
            <person name="Sugiura K."/>
            <person name="Sultana R."/>
            <person name="Takenaka Y."/>
            <person name="Taki K."/>
            <person name="Tammoja K."/>
            <person name="Tan S.L."/>
            <person name="Tang S."/>
            <person name="Taylor M.S."/>
            <person name="Tegner J."/>
            <person name="Teichmann S.A."/>
            <person name="Ueda H.R."/>
            <person name="van Nimwegen E."/>
            <person name="Verardo R."/>
            <person name="Wei C.L."/>
            <person name="Yagi K."/>
            <person name="Yamanishi H."/>
            <person name="Zabarovsky E."/>
            <person name="Zhu S."/>
            <person name="Zimmer A."/>
            <person name="Hide W."/>
            <person name="Bult C."/>
            <person name="Grimmond S.M."/>
            <person name="Teasdale R.D."/>
            <person name="Liu E.T."/>
            <person name="Brusic V."/>
            <person name="Quackenbush J."/>
            <person name="Wahlestedt C."/>
            <person name="Mattick J.S."/>
            <person name="Hume D.A."/>
            <person name="Kai C."/>
            <person name="Sasaki D."/>
            <person name="Tomaru Y."/>
            <person name="Fukuda S."/>
            <person name="Kanamori-Katayama M."/>
            <person name="Suzuki M."/>
            <person name="Aoki J."/>
            <person name="Arakawa T."/>
            <person name="Iida J."/>
            <person name="Imamura K."/>
            <person name="Itoh M."/>
            <person name="Kato T."/>
            <person name="Kawaji H."/>
            <person name="Kawagashira N."/>
            <person name="Kawashima T."/>
            <person name="Kojima M."/>
            <person name="Kondo S."/>
            <person name="Konno H."/>
            <person name="Nakano K."/>
            <person name="Ninomiya N."/>
            <person name="Nishio T."/>
            <person name="Okada M."/>
            <person name="Plessy C."/>
            <person name="Shibata K."/>
            <person name="Shiraki T."/>
            <person name="Suzuki S."/>
            <person name="Tagami M."/>
            <person name="Waki K."/>
            <person name="Watahiki A."/>
            <person name="Okamura-Oho Y."/>
            <person name="Suzuki H."/>
            <person name="Kawai J."/>
            <person name="Hayashizaki Y."/>
        </authorList>
    </citation>
    <scope>NUCLEOTIDE SEQUENCE [LARGE SCALE MRNA]</scope>
    <source>
        <strain>C57BL/6J</strain>
        <tissue>Cerebellum</tissue>
        <tissue>Skin</tissue>
    </source>
</reference>
<reference key="3">
    <citation type="journal article" date="2004" name="Genome Res.">
        <title>The status, quality, and expansion of the NIH full-length cDNA project: the Mammalian Gene Collection (MGC).</title>
        <authorList>
            <consortium name="The MGC Project Team"/>
        </authorList>
    </citation>
    <scope>NUCLEOTIDE SEQUENCE [LARGE SCALE MRNA]</scope>
    <source>
        <strain>C57BL/6J</strain>
        <strain>FVB/N</strain>
        <tissue>Brain</tissue>
        <tissue>Colon</tissue>
    </source>
</reference>
<reference key="4">
    <citation type="journal article" date="2003" name="J. Biol. Chem.">
        <title>Biochemical properties of mammalian neutral sphingomyelinase 2 and its role in sphingolipid metabolism.</title>
        <authorList>
            <person name="Marchesini N."/>
            <person name="Luberto C."/>
            <person name="Hannun Y.A."/>
        </authorList>
    </citation>
    <scope>CATALYTIC ACTIVITY</scope>
    <scope>COFACTOR</scope>
    <scope>ACTIVITY REGULATION</scope>
</reference>
<reference key="5">
    <citation type="journal article" date="2004" name="J. Biol. Chem.">
        <title>Role for mammalian neutral sphingomyelinase 2 in confluence-induced growth arrest of MCF7 cells.</title>
        <authorList>
            <person name="Marchesini N."/>
            <person name="Osta W."/>
            <person name="Bielawski J."/>
            <person name="Luberto C."/>
            <person name="Obeid L.M."/>
            <person name="Hannun Y.A."/>
        </authorList>
    </citation>
    <scope>FUNCTION</scope>
    <scope>CATALYTIC ACTIVITY</scope>
</reference>
<reference key="6">
    <citation type="journal article" date="2005" name="J. Neurosci. Res.">
        <title>Differential regulation of ceramide in lipid-rich microdomains (rafts): antagonistic role of palmitoyl:protein thioesterase and neutral sphingomyelinase 2.</title>
        <authorList>
            <person name="Goswami R."/>
            <person name="Ahmed M."/>
            <person name="Kilkus J."/>
            <person name="Han T."/>
            <person name="Dawson S.A."/>
            <person name="Dawson G."/>
        </authorList>
    </citation>
    <scope>FUNCTION</scope>
</reference>
<reference key="7">
    <citation type="journal article" date="2005" name="Nat. Genet.">
        <title>A deletion in the gene encoding sphingomyelin phosphodiesterase 3 (Smpd3) results in osteogenesis and dentinogenesis imperfecta in the mouse.</title>
        <authorList>
            <person name="Aubin I."/>
            <person name="Adams C.P."/>
            <person name="Opsahl S."/>
            <person name="Septier D."/>
            <person name="Bishop C.E."/>
            <person name="Auge N."/>
            <person name="Salvayre R."/>
            <person name="Negre-Salvayre A."/>
            <person name="Goldberg M."/>
            <person name="Guenet J.-L."/>
            <person name="Poirier C."/>
        </authorList>
    </citation>
    <scope>FUNCTION</scope>
</reference>
<reference key="8">
    <citation type="journal article" date="2005" name="Proc. Natl. Acad. Sci. U.S.A.">
        <title>Neutral sphingomyelinase 2 (smpd3) in the control of postnatal growth and development.</title>
        <authorList>
            <person name="Stoffel W."/>
            <person name="Jenke B."/>
            <person name="Bloeck B."/>
            <person name="Zumbansen M."/>
            <person name="Koebke J."/>
        </authorList>
    </citation>
    <scope>FUNCTION</scope>
    <scope>DISRUPTION PHENOTYPE</scope>
    <scope>SUBCELLULAR LOCATION</scope>
</reference>
<reference key="9">
    <citation type="journal article" date="2007" name="J. Biol. Chem.">
        <title>Neutral sphingomyelinase 2 is palmitoylated on multiple cysteine residues. Role of palmitoylation in subcellular localization.</title>
        <authorList>
            <person name="Tani M."/>
            <person name="Hannun Y.A."/>
        </authorList>
    </citation>
    <scope>SUBCELLULAR LOCATION</scope>
    <scope>PALMITOYLATION AT CYS-53; CYS-54; CYS-59; CYS-395 AND CYS-396</scope>
</reference>
<reference key="10">
    <citation type="journal article" date="2010" name="Cell">
        <title>A tissue-specific atlas of mouse protein phosphorylation and expression.</title>
        <authorList>
            <person name="Huttlin E.L."/>
            <person name="Jedrychowski M.P."/>
            <person name="Elias J.E."/>
            <person name="Goswami T."/>
            <person name="Rad R."/>
            <person name="Beausoleil S.A."/>
            <person name="Villen J."/>
            <person name="Haas W."/>
            <person name="Sowa M.E."/>
            <person name="Gygi S.P."/>
        </authorList>
    </citation>
    <scope>PHOSPHORYLATION [LARGE SCALE ANALYSIS] AT SER-178 AND SER-289</scope>
    <scope>IDENTIFICATION BY MASS SPECTROMETRY [LARGE SCALE ANALYSIS]</scope>
    <source>
        <tissue>Brain</tissue>
        <tissue>Brown adipose tissue</tissue>
    </source>
</reference>
<reference key="11">
    <citation type="journal article" date="2011" name="J. Biol. Chem.">
        <title>Identification of novel anionic phospholipid binding domains in neutral sphingomyelinase 2 with selective binding preference.</title>
        <authorList>
            <person name="Wu B.X."/>
            <person name="Clarke C.J."/>
            <person name="Matmati N."/>
            <person name="Montefusco D."/>
            <person name="Bartke N."/>
            <person name="Hannun Y.A."/>
        </authorList>
    </citation>
    <scope>FUNCTION</scope>
    <scope>CATALYTIC ACTIVITY</scope>
    <scope>ACTIVITY REGULATION</scope>
    <scope>MUTAGENESIS OF ARG-33; 45-LYS--ARG-48; 92-ARG-ARG-93; ARG-92; ARG-93 AND ARG-99</scope>
    <scope>SUBCELLULAR LOCATION</scope>
</reference>